<keyword id="KW-0030">Aminoacyl-tRNA synthetase</keyword>
<keyword id="KW-0067">ATP-binding</keyword>
<keyword id="KW-0963">Cytoplasm</keyword>
<keyword id="KW-0436">Ligase</keyword>
<keyword id="KW-0479">Metal-binding</keyword>
<keyword id="KW-0547">Nucleotide-binding</keyword>
<keyword id="KW-0648">Protein biosynthesis</keyword>
<keyword id="KW-0862">Zinc</keyword>
<feature type="chain" id="PRO_1000093696" description="Methionine--tRNA ligase">
    <location>
        <begin position="1"/>
        <end position="544"/>
    </location>
</feature>
<feature type="short sequence motif" description="'HIGH' region">
    <location>
        <begin position="10"/>
        <end position="20"/>
    </location>
</feature>
<feature type="short sequence motif" description="'KMSKS' region">
    <location>
        <begin position="329"/>
        <end position="333"/>
    </location>
</feature>
<feature type="binding site" evidence="1">
    <location>
        <position position="141"/>
    </location>
    <ligand>
        <name>Zn(2+)</name>
        <dbReference type="ChEBI" id="CHEBI:29105"/>
    </ligand>
</feature>
<feature type="binding site" evidence="1">
    <location>
        <position position="144"/>
    </location>
    <ligand>
        <name>Zn(2+)</name>
        <dbReference type="ChEBI" id="CHEBI:29105"/>
    </ligand>
</feature>
<feature type="binding site" evidence="1">
    <location>
        <position position="153"/>
    </location>
    <ligand>
        <name>Zn(2+)</name>
        <dbReference type="ChEBI" id="CHEBI:29105"/>
    </ligand>
</feature>
<feature type="binding site" evidence="1">
    <location>
        <position position="156"/>
    </location>
    <ligand>
        <name>Zn(2+)</name>
        <dbReference type="ChEBI" id="CHEBI:29105"/>
    </ligand>
</feature>
<feature type="binding site" evidence="1">
    <location>
        <position position="332"/>
    </location>
    <ligand>
        <name>ATP</name>
        <dbReference type="ChEBI" id="CHEBI:30616"/>
    </ligand>
</feature>
<accession>A9VP41</accession>
<gene>
    <name evidence="1" type="primary">metG</name>
    <name type="ordered locus">BcerKBAB4_4862</name>
</gene>
<name>SYM_BACMK</name>
<evidence type="ECO:0000255" key="1">
    <source>
        <dbReference type="HAMAP-Rule" id="MF_00098"/>
    </source>
</evidence>
<comment type="function">
    <text evidence="1">Is required not only for elongation of protein synthesis but also for the initiation of all mRNA translation through initiator tRNA(fMet) aminoacylation.</text>
</comment>
<comment type="catalytic activity">
    <reaction evidence="1">
        <text>tRNA(Met) + L-methionine + ATP = L-methionyl-tRNA(Met) + AMP + diphosphate</text>
        <dbReference type="Rhea" id="RHEA:13481"/>
        <dbReference type="Rhea" id="RHEA-COMP:9667"/>
        <dbReference type="Rhea" id="RHEA-COMP:9698"/>
        <dbReference type="ChEBI" id="CHEBI:30616"/>
        <dbReference type="ChEBI" id="CHEBI:33019"/>
        <dbReference type="ChEBI" id="CHEBI:57844"/>
        <dbReference type="ChEBI" id="CHEBI:78442"/>
        <dbReference type="ChEBI" id="CHEBI:78530"/>
        <dbReference type="ChEBI" id="CHEBI:456215"/>
        <dbReference type="EC" id="6.1.1.10"/>
    </reaction>
</comment>
<comment type="cofactor">
    <cofactor evidence="1">
        <name>Zn(2+)</name>
        <dbReference type="ChEBI" id="CHEBI:29105"/>
    </cofactor>
    <text evidence="1">Binds 1 zinc ion per subunit.</text>
</comment>
<comment type="subunit">
    <text evidence="1">Monomer.</text>
</comment>
<comment type="subcellular location">
    <subcellularLocation>
        <location evidence="1">Cytoplasm</location>
    </subcellularLocation>
</comment>
<comment type="similarity">
    <text evidence="1">Belongs to the class-I aminoacyl-tRNA synthetase family. MetG type 1 subfamily.</text>
</comment>
<reference key="1">
    <citation type="journal article" date="2008" name="Chem. Biol. Interact.">
        <title>Extending the Bacillus cereus group genomics to putative food-borne pathogens of different toxicity.</title>
        <authorList>
            <person name="Lapidus A."/>
            <person name="Goltsman E."/>
            <person name="Auger S."/>
            <person name="Galleron N."/>
            <person name="Segurens B."/>
            <person name="Dossat C."/>
            <person name="Land M.L."/>
            <person name="Broussolle V."/>
            <person name="Brillard J."/>
            <person name="Guinebretiere M.-H."/>
            <person name="Sanchis V."/>
            <person name="Nguen-the C."/>
            <person name="Lereclus D."/>
            <person name="Richardson P."/>
            <person name="Wincker P."/>
            <person name="Weissenbach J."/>
            <person name="Ehrlich S.D."/>
            <person name="Sorokin A."/>
        </authorList>
    </citation>
    <scope>NUCLEOTIDE SEQUENCE [LARGE SCALE GENOMIC DNA]</scope>
    <source>
        <strain>KBAB4</strain>
    </source>
</reference>
<protein>
    <recommendedName>
        <fullName evidence="1">Methionine--tRNA ligase</fullName>
        <ecNumber evidence="1">6.1.1.10</ecNumber>
    </recommendedName>
    <alternativeName>
        <fullName evidence="1">Methionyl-tRNA synthetase</fullName>
        <shortName evidence="1">MetRS</shortName>
    </alternativeName>
</protein>
<organism>
    <name type="scientific">Bacillus mycoides (strain KBAB4)</name>
    <name type="common">Bacillus weihenstephanensis</name>
    <dbReference type="NCBI Taxonomy" id="315730"/>
    <lineage>
        <taxon>Bacteria</taxon>
        <taxon>Bacillati</taxon>
        <taxon>Bacillota</taxon>
        <taxon>Bacilli</taxon>
        <taxon>Bacillales</taxon>
        <taxon>Bacillaceae</taxon>
        <taxon>Bacillus</taxon>
        <taxon>Bacillus cereus group</taxon>
    </lineage>
</organism>
<sequence>MSIFIGGAWPYANGSLHLGHIASLLPGDILARYYRAKGEHVLYVSGSDCNGTPITIRAKQEGVTVKEIADKYHEEFERCFRSLGFTYDCYTRTDSEHHHETVQKVFLRLLEEGYIYKKVVEQAYCETCTQFLPDRYVEGICPHCHEAARGDQCDACSAILDPLDLLEKKCKLCGSTPSVQETEHFYFALHKFQQQIKEAVEIAKQKGTWRDNAIQLTERYLKEGLQDRAVSRDLPIGVPIPVAGYEDKKIYVWIEAVTGYYSASKHWVEETGKDDQEFWDKEAKTYYVHGKDNIPFHSIIWPAVLLGIGEEAIPRHIVSNEYLTVEKRKLSTSKNWAVWVPDILERYNPDSIRYFLTVNAPENRDTDFSWREFIYSHNSELLGAYGNFVNRTLKFIEKYYGGTVPKGSIDVELKDKVEGLYKSVGEAIEQTKFKVALETIFDAVRFANKYFDEKQPWKQREDDPVSCEETIYNCVYLIANFAQLLEPFLPFSSERVRNTLSSVKVNWEPQNTLPNRIDNVQPLFERIDVKQIEHEVEKLYGAVK</sequence>
<proteinExistence type="inferred from homology"/>
<dbReference type="EC" id="6.1.1.10" evidence="1"/>
<dbReference type="EMBL" id="CP000903">
    <property type="protein sequence ID" value="ABY46010.1"/>
    <property type="molecule type" value="Genomic_DNA"/>
</dbReference>
<dbReference type="RefSeq" id="WP_012261949.1">
    <property type="nucleotide sequence ID" value="NC_010184.1"/>
</dbReference>
<dbReference type="SMR" id="A9VP41"/>
<dbReference type="KEGG" id="bwe:BcerKBAB4_4862"/>
<dbReference type="eggNOG" id="COG0143">
    <property type="taxonomic scope" value="Bacteria"/>
</dbReference>
<dbReference type="HOGENOM" id="CLU_009710_1_2_9"/>
<dbReference type="Proteomes" id="UP000002154">
    <property type="component" value="Chromosome"/>
</dbReference>
<dbReference type="GO" id="GO:0005829">
    <property type="term" value="C:cytosol"/>
    <property type="evidence" value="ECO:0007669"/>
    <property type="project" value="TreeGrafter"/>
</dbReference>
<dbReference type="GO" id="GO:0005524">
    <property type="term" value="F:ATP binding"/>
    <property type="evidence" value="ECO:0007669"/>
    <property type="project" value="UniProtKB-UniRule"/>
</dbReference>
<dbReference type="GO" id="GO:0046872">
    <property type="term" value="F:metal ion binding"/>
    <property type="evidence" value="ECO:0007669"/>
    <property type="project" value="UniProtKB-KW"/>
</dbReference>
<dbReference type="GO" id="GO:0004825">
    <property type="term" value="F:methionine-tRNA ligase activity"/>
    <property type="evidence" value="ECO:0007669"/>
    <property type="project" value="UniProtKB-UniRule"/>
</dbReference>
<dbReference type="GO" id="GO:0006431">
    <property type="term" value="P:methionyl-tRNA aminoacylation"/>
    <property type="evidence" value="ECO:0007669"/>
    <property type="project" value="UniProtKB-UniRule"/>
</dbReference>
<dbReference type="CDD" id="cd07957">
    <property type="entry name" value="Anticodon_Ia_Met"/>
    <property type="match status" value="1"/>
</dbReference>
<dbReference type="CDD" id="cd00814">
    <property type="entry name" value="MetRS_core"/>
    <property type="match status" value="1"/>
</dbReference>
<dbReference type="FunFam" id="2.20.28.20:FF:000001">
    <property type="entry name" value="Methionine--tRNA ligase"/>
    <property type="match status" value="1"/>
</dbReference>
<dbReference type="Gene3D" id="3.40.50.620">
    <property type="entry name" value="HUPs"/>
    <property type="match status" value="1"/>
</dbReference>
<dbReference type="Gene3D" id="1.10.730.10">
    <property type="entry name" value="Isoleucyl-tRNA Synthetase, Domain 1"/>
    <property type="match status" value="1"/>
</dbReference>
<dbReference type="Gene3D" id="2.20.28.20">
    <property type="entry name" value="Methionyl-tRNA synthetase, Zn-domain"/>
    <property type="match status" value="1"/>
</dbReference>
<dbReference type="HAMAP" id="MF_00098">
    <property type="entry name" value="Met_tRNA_synth_type1"/>
    <property type="match status" value="1"/>
</dbReference>
<dbReference type="InterPro" id="IPR001412">
    <property type="entry name" value="aa-tRNA-synth_I_CS"/>
</dbReference>
<dbReference type="InterPro" id="IPR041872">
    <property type="entry name" value="Anticodon_Met"/>
</dbReference>
<dbReference type="InterPro" id="IPR023458">
    <property type="entry name" value="Met-tRNA_ligase_1"/>
</dbReference>
<dbReference type="InterPro" id="IPR014758">
    <property type="entry name" value="Met-tRNA_synth"/>
</dbReference>
<dbReference type="InterPro" id="IPR015413">
    <property type="entry name" value="Methionyl/Leucyl_tRNA_Synth"/>
</dbReference>
<dbReference type="InterPro" id="IPR033911">
    <property type="entry name" value="MetRS_core"/>
</dbReference>
<dbReference type="InterPro" id="IPR029038">
    <property type="entry name" value="MetRS_Zn"/>
</dbReference>
<dbReference type="InterPro" id="IPR014729">
    <property type="entry name" value="Rossmann-like_a/b/a_fold"/>
</dbReference>
<dbReference type="InterPro" id="IPR009080">
    <property type="entry name" value="tRNAsynth_Ia_anticodon-bd"/>
</dbReference>
<dbReference type="NCBIfam" id="TIGR00398">
    <property type="entry name" value="metG"/>
    <property type="match status" value="1"/>
</dbReference>
<dbReference type="NCBIfam" id="NF001100">
    <property type="entry name" value="PRK00133.1"/>
    <property type="match status" value="1"/>
</dbReference>
<dbReference type="PANTHER" id="PTHR45765">
    <property type="entry name" value="METHIONINE--TRNA LIGASE"/>
    <property type="match status" value="1"/>
</dbReference>
<dbReference type="PANTHER" id="PTHR45765:SF1">
    <property type="entry name" value="METHIONINE--TRNA LIGASE, CYTOPLASMIC"/>
    <property type="match status" value="1"/>
</dbReference>
<dbReference type="Pfam" id="PF19303">
    <property type="entry name" value="Anticodon_3"/>
    <property type="match status" value="1"/>
</dbReference>
<dbReference type="Pfam" id="PF09334">
    <property type="entry name" value="tRNA-synt_1g"/>
    <property type="match status" value="1"/>
</dbReference>
<dbReference type="PRINTS" id="PR01041">
    <property type="entry name" value="TRNASYNTHMET"/>
</dbReference>
<dbReference type="SUPFAM" id="SSF47323">
    <property type="entry name" value="Anticodon-binding domain of a subclass of class I aminoacyl-tRNA synthetases"/>
    <property type="match status" value="1"/>
</dbReference>
<dbReference type="SUPFAM" id="SSF57770">
    <property type="entry name" value="Methionyl-tRNA synthetase (MetRS), Zn-domain"/>
    <property type="match status" value="1"/>
</dbReference>
<dbReference type="SUPFAM" id="SSF52374">
    <property type="entry name" value="Nucleotidylyl transferase"/>
    <property type="match status" value="1"/>
</dbReference>
<dbReference type="PROSITE" id="PS00178">
    <property type="entry name" value="AA_TRNA_LIGASE_I"/>
    <property type="match status" value="1"/>
</dbReference>